<organism>
    <name type="scientific">Arabidopsis thaliana</name>
    <name type="common">Mouse-ear cress</name>
    <dbReference type="NCBI Taxonomy" id="3702"/>
    <lineage>
        <taxon>Eukaryota</taxon>
        <taxon>Viridiplantae</taxon>
        <taxon>Streptophyta</taxon>
        <taxon>Embryophyta</taxon>
        <taxon>Tracheophyta</taxon>
        <taxon>Spermatophyta</taxon>
        <taxon>Magnoliopsida</taxon>
        <taxon>eudicotyledons</taxon>
        <taxon>Gunneridae</taxon>
        <taxon>Pentapetalae</taxon>
        <taxon>rosids</taxon>
        <taxon>malvids</taxon>
        <taxon>Brassicales</taxon>
        <taxon>Brassicaceae</taxon>
        <taxon>Camelineae</taxon>
        <taxon>Arabidopsis</taxon>
    </lineage>
</organism>
<comment type="function">
    <text evidence="2">Protease involved in the C-terminal processing of the chloroplastic D1 protein of photosystem II. This proteolytic processing is necessary to allow the light-driven assembly of the tetranuclear manganese cluster, which is responsible for photosynthetic water oxidation.</text>
</comment>
<comment type="catalytic activity">
    <reaction>
        <text>The enzyme shows specific recognition of a C-terminal tripeptide, Xaa-Yaa-Zaa, in which Xaa is preferably Ala or Leu, Yaa is preferably Ala or Tyr, and Zaa is preferably Ala, but then cleaves at a variable distance from the C-terminus. A typical cleavage is -Ala-Ala-|-Arg-Ala-Ala-Lys-Glu-Asn-Tyr-Ala-Leu-Ala-Ala.</text>
        <dbReference type="EC" id="3.4.21.102"/>
    </reaction>
</comment>
<comment type="subcellular location">
    <subcellularLocation>
        <location evidence="5">Plastid</location>
        <location evidence="5">Chloroplast thylakoid lumen</location>
    </subcellularLocation>
</comment>
<comment type="alternative products">
    <event type="alternative splicing"/>
    <isoform>
        <id>O23614-1</id>
        <name>1</name>
        <sequence type="displayed"/>
    </isoform>
    <isoform>
        <id>O23614-2</id>
        <name>2</name>
        <sequence type="described" ref="VSP_054872"/>
    </isoform>
</comment>
<comment type="similarity">
    <text evidence="7">Belongs to the peptidase S41A family.</text>
</comment>
<keyword id="KW-0025">Alternative splicing</keyword>
<keyword id="KW-0150">Chloroplast</keyword>
<keyword id="KW-0903">Direct protein sequencing</keyword>
<keyword id="KW-0378">Hydrolase</keyword>
<keyword id="KW-0934">Plastid</keyword>
<keyword id="KW-0645">Protease</keyword>
<keyword id="KW-1185">Reference proteome</keyword>
<keyword id="KW-0720">Serine protease</keyword>
<keyword id="KW-0793">Thylakoid</keyword>
<keyword id="KW-0809">Transit peptide</keyword>
<dbReference type="EC" id="3.4.21.102"/>
<dbReference type="EMBL" id="Z97344">
    <property type="protein sequence ID" value="CAB10554.1"/>
    <property type="molecule type" value="Genomic_DNA"/>
</dbReference>
<dbReference type="EMBL" id="AL161547">
    <property type="protein sequence ID" value="CAB78777.1"/>
    <property type="molecule type" value="Genomic_DNA"/>
</dbReference>
<dbReference type="EMBL" id="CP002687">
    <property type="protein sequence ID" value="AEE83943.1"/>
    <property type="molecule type" value="Genomic_DNA"/>
</dbReference>
<dbReference type="EMBL" id="CP002687">
    <property type="protein sequence ID" value="AEE83944.1"/>
    <property type="molecule type" value="Genomic_DNA"/>
</dbReference>
<dbReference type="EMBL" id="AY054171">
    <property type="protein sequence ID" value="AAL06832.1"/>
    <property type="molecule type" value="mRNA"/>
</dbReference>
<dbReference type="EMBL" id="AF424602">
    <property type="protein sequence ID" value="AAL11596.1"/>
    <property type="molecule type" value="mRNA"/>
</dbReference>
<dbReference type="EMBL" id="BT006343">
    <property type="protein sequence ID" value="AAP21151.1"/>
    <property type="molecule type" value="mRNA"/>
</dbReference>
<dbReference type="EMBL" id="AJ132544">
    <property type="protein sequence ID" value="CAA10694.1"/>
    <property type="molecule type" value="mRNA"/>
</dbReference>
<dbReference type="PIR" id="E71447">
    <property type="entry name" value="E71447"/>
</dbReference>
<dbReference type="RefSeq" id="NP_193509.1">
    <molecule id="O23614-1"/>
    <property type="nucleotide sequence ID" value="NM_117883.2"/>
</dbReference>
<dbReference type="RefSeq" id="NP_849401.1">
    <molecule id="O23614-2"/>
    <property type="nucleotide sequence ID" value="NM_179070.1"/>
</dbReference>
<dbReference type="SMR" id="O23614"/>
<dbReference type="FunCoup" id="O23614">
    <property type="interactions" value="916"/>
</dbReference>
<dbReference type="IntAct" id="O23614">
    <property type="interactions" value="1"/>
</dbReference>
<dbReference type="STRING" id="3702.O23614"/>
<dbReference type="MEROPS" id="S41.002"/>
<dbReference type="GlyGen" id="O23614">
    <property type="glycosylation" value="1 site"/>
</dbReference>
<dbReference type="iPTMnet" id="O23614"/>
<dbReference type="PaxDb" id="3702-AT4G17740.1"/>
<dbReference type="ProteomicsDB" id="220372">
    <molecule id="O23614-1"/>
</dbReference>
<dbReference type="EnsemblPlants" id="AT4G17740.1">
    <molecule id="O23614-1"/>
    <property type="protein sequence ID" value="AT4G17740.1"/>
    <property type="gene ID" value="AT4G17740"/>
</dbReference>
<dbReference type="EnsemblPlants" id="AT4G17740.2">
    <molecule id="O23614-2"/>
    <property type="protein sequence ID" value="AT4G17740.2"/>
    <property type="gene ID" value="AT4G17740"/>
</dbReference>
<dbReference type="GeneID" id="827495"/>
<dbReference type="Gramene" id="AT4G17740.1">
    <molecule id="O23614-1"/>
    <property type="protein sequence ID" value="AT4G17740.1"/>
    <property type="gene ID" value="AT4G17740"/>
</dbReference>
<dbReference type="Gramene" id="AT4G17740.2">
    <molecule id="O23614-2"/>
    <property type="protein sequence ID" value="AT4G17740.2"/>
    <property type="gene ID" value="AT4G17740"/>
</dbReference>
<dbReference type="KEGG" id="ath:AT4G17740"/>
<dbReference type="Araport" id="AT4G17740"/>
<dbReference type="TAIR" id="AT4G17740"/>
<dbReference type="eggNOG" id="ENOG502QSWI">
    <property type="taxonomic scope" value="Eukaryota"/>
</dbReference>
<dbReference type="InParanoid" id="O23614"/>
<dbReference type="OMA" id="EDAFCSC"/>
<dbReference type="OrthoDB" id="43580at2759"/>
<dbReference type="PhylomeDB" id="O23614"/>
<dbReference type="BRENDA" id="3.4.21.102">
    <property type="organism ID" value="399"/>
</dbReference>
<dbReference type="PRO" id="PR:O23614"/>
<dbReference type="Proteomes" id="UP000006548">
    <property type="component" value="Chromosome 4"/>
</dbReference>
<dbReference type="ExpressionAtlas" id="O23614">
    <property type="expression patterns" value="baseline and differential"/>
</dbReference>
<dbReference type="GO" id="GO:0009543">
    <property type="term" value="C:chloroplast thylakoid lumen"/>
    <property type="evidence" value="ECO:0007669"/>
    <property type="project" value="UniProtKB-SubCell"/>
</dbReference>
<dbReference type="GO" id="GO:0005739">
    <property type="term" value="C:mitochondrion"/>
    <property type="evidence" value="ECO:0007005"/>
    <property type="project" value="TAIR"/>
</dbReference>
<dbReference type="GO" id="GO:0009579">
    <property type="term" value="C:thylakoid"/>
    <property type="evidence" value="ECO:0007005"/>
    <property type="project" value="TAIR"/>
</dbReference>
<dbReference type="GO" id="GO:0031977">
    <property type="term" value="C:thylakoid lumen"/>
    <property type="evidence" value="ECO:0007005"/>
    <property type="project" value="TAIR"/>
</dbReference>
<dbReference type="GO" id="GO:0008233">
    <property type="term" value="F:peptidase activity"/>
    <property type="evidence" value="ECO:0000314"/>
    <property type="project" value="TAIR"/>
</dbReference>
<dbReference type="GO" id="GO:0004252">
    <property type="term" value="F:serine-type endopeptidase activity"/>
    <property type="evidence" value="ECO:0007669"/>
    <property type="project" value="UniProtKB-EC"/>
</dbReference>
<dbReference type="GO" id="GO:0006508">
    <property type="term" value="P:proteolysis"/>
    <property type="evidence" value="ECO:0007669"/>
    <property type="project" value="UniProtKB-KW"/>
</dbReference>
<dbReference type="CDD" id="cd06782">
    <property type="entry name" value="cpPDZ_CPP-like"/>
    <property type="match status" value="1"/>
</dbReference>
<dbReference type="CDD" id="cd07560">
    <property type="entry name" value="Peptidase_S41_CPP"/>
    <property type="match status" value="1"/>
</dbReference>
<dbReference type="FunFam" id="3.30.750.44:FF:000010">
    <property type="entry name" value="Carboxyl-terminal-processing peptidase 1 chloroplastic"/>
    <property type="match status" value="1"/>
</dbReference>
<dbReference type="FunFam" id="3.30.750.44:FF:000002">
    <property type="entry name" value="carboxyl-terminal-processing peptidase 2, chloroplastic"/>
    <property type="match status" value="1"/>
</dbReference>
<dbReference type="FunFam" id="3.90.226.10:FF:000043">
    <property type="entry name" value="carboxyl-terminal-processing peptidase 2, chloroplastic"/>
    <property type="match status" value="1"/>
</dbReference>
<dbReference type="Gene3D" id="2.30.42.10">
    <property type="match status" value="1"/>
</dbReference>
<dbReference type="Gene3D" id="3.30.750.44">
    <property type="match status" value="1"/>
</dbReference>
<dbReference type="Gene3D" id="3.90.226.10">
    <property type="entry name" value="2-enoyl-CoA Hydratase, Chain A, domain 1"/>
    <property type="match status" value="1"/>
</dbReference>
<dbReference type="InterPro" id="IPR029045">
    <property type="entry name" value="ClpP/crotonase-like_dom_sf"/>
</dbReference>
<dbReference type="InterPro" id="IPR001478">
    <property type="entry name" value="PDZ"/>
</dbReference>
<dbReference type="InterPro" id="IPR041489">
    <property type="entry name" value="PDZ_6"/>
</dbReference>
<dbReference type="InterPro" id="IPR036034">
    <property type="entry name" value="PDZ_sf"/>
</dbReference>
<dbReference type="InterPro" id="IPR004447">
    <property type="entry name" value="Peptidase_S41A"/>
</dbReference>
<dbReference type="InterPro" id="IPR005151">
    <property type="entry name" value="Tail-specific_protease"/>
</dbReference>
<dbReference type="NCBIfam" id="TIGR00225">
    <property type="entry name" value="prc"/>
    <property type="match status" value="1"/>
</dbReference>
<dbReference type="PANTHER" id="PTHR32060:SF7">
    <property type="entry name" value="CARBOXYL-TERMINAL-PROCESSING PEPTIDASE 2, CHLOROPLASTIC"/>
    <property type="match status" value="1"/>
</dbReference>
<dbReference type="PANTHER" id="PTHR32060">
    <property type="entry name" value="TAIL-SPECIFIC PROTEASE"/>
    <property type="match status" value="1"/>
</dbReference>
<dbReference type="Pfam" id="PF17820">
    <property type="entry name" value="PDZ_6"/>
    <property type="match status" value="1"/>
</dbReference>
<dbReference type="Pfam" id="PF03572">
    <property type="entry name" value="Peptidase_S41"/>
    <property type="match status" value="1"/>
</dbReference>
<dbReference type="SMART" id="SM00228">
    <property type="entry name" value="PDZ"/>
    <property type="match status" value="1"/>
</dbReference>
<dbReference type="SMART" id="SM00245">
    <property type="entry name" value="TSPc"/>
    <property type="match status" value="1"/>
</dbReference>
<dbReference type="SUPFAM" id="SSF52096">
    <property type="entry name" value="ClpP/crotonase"/>
    <property type="match status" value="1"/>
</dbReference>
<dbReference type="SUPFAM" id="SSF50156">
    <property type="entry name" value="PDZ domain-like"/>
    <property type="match status" value="1"/>
</dbReference>
<dbReference type="PROSITE" id="PS50106">
    <property type="entry name" value="PDZ"/>
    <property type="match status" value="1"/>
</dbReference>
<name>CTPA2_ARATH</name>
<gene>
    <name type="primary">CTPA2</name>
    <name type="ordered locus">At4g17740</name>
    <name type="ORF">dl4905c</name>
    <name type="ORF">FCAALL.169</name>
</gene>
<reference key="1">
    <citation type="journal article" date="1998" name="Nature">
        <title>Analysis of 1.9 Mb of contiguous sequence from chromosome 4 of Arabidopsis thaliana.</title>
        <authorList>
            <person name="Bevan M."/>
            <person name="Bancroft I."/>
            <person name="Bent E."/>
            <person name="Love K."/>
            <person name="Goodman H.M."/>
            <person name="Dean C."/>
            <person name="Bergkamp R."/>
            <person name="Dirkse W."/>
            <person name="van Staveren M."/>
            <person name="Stiekema W."/>
            <person name="Drost L."/>
            <person name="Ridley P."/>
            <person name="Hudson S.-A."/>
            <person name="Patel K."/>
            <person name="Murphy G."/>
            <person name="Piffanelli P."/>
            <person name="Wedler H."/>
            <person name="Wedler E."/>
            <person name="Wambutt R."/>
            <person name="Weitzenegger T."/>
            <person name="Pohl T."/>
            <person name="Terryn N."/>
            <person name="Gielen J."/>
            <person name="Villarroel R."/>
            <person name="De Clercq R."/>
            <person name="van Montagu M."/>
            <person name="Lecharny A."/>
            <person name="Aubourg S."/>
            <person name="Gy I."/>
            <person name="Kreis M."/>
            <person name="Lao N."/>
            <person name="Kavanagh T."/>
            <person name="Hempel S."/>
            <person name="Kotter P."/>
            <person name="Entian K.-D."/>
            <person name="Rieger M."/>
            <person name="Schaefer M."/>
            <person name="Funk B."/>
            <person name="Mueller-Auer S."/>
            <person name="Silvey M."/>
            <person name="James R."/>
            <person name="Monfort A."/>
            <person name="Pons A."/>
            <person name="Puigdomenech P."/>
            <person name="Douka A."/>
            <person name="Voukelatou E."/>
            <person name="Milioni D."/>
            <person name="Hatzopoulos P."/>
            <person name="Piravandi E."/>
            <person name="Obermaier B."/>
            <person name="Hilbert H."/>
            <person name="Duesterhoeft A."/>
            <person name="Moores T."/>
            <person name="Jones J.D.G."/>
            <person name="Eneva T."/>
            <person name="Palme K."/>
            <person name="Benes V."/>
            <person name="Rechmann S."/>
            <person name="Ansorge W."/>
            <person name="Cooke R."/>
            <person name="Berger C."/>
            <person name="Delseny M."/>
            <person name="Voet M."/>
            <person name="Volckaert G."/>
            <person name="Mewes H.-W."/>
            <person name="Klosterman S."/>
            <person name="Schueller C."/>
            <person name="Chalwatzis N."/>
        </authorList>
    </citation>
    <scope>NUCLEOTIDE SEQUENCE [LARGE SCALE GENOMIC DNA]</scope>
    <source>
        <strain>cv. Columbia</strain>
    </source>
</reference>
<reference key="2">
    <citation type="journal article" date="1999" name="Nature">
        <title>Sequence and analysis of chromosome 4 of the plant Arabidopsis thaliana.</title>
        <authorList>
            <person name="Mayer K.F.X."/>
            <person name="Schueller C."/>
            <person name="Wambutt R."/>
            <person name="Murphy G."/>
            <person name="Volckaert G."/>
            <person name="Pohl T."/>
            <person name="Duesterhoeft A."/>
            <person name="Stiekema W."/>
            <person name="Entian K.-D."/>
            <person name="Terryn N."/>
            <person name="Harris B."/>
            <person name="Ansorge W."/>
            <person name="Brandt P."/>
            <person name="Grivell L.A."/>
            <person name="Rieger M."/>
            <person name="Weichselgartner M."/>
            <person name="de Simone V."/>
            <person name="Obermaier B."/>
            <person name="Mache R."/>
            <person name="Mueller M."/>
            <person name="Kreis M."/>
            <person name="Delseny M."/>
            <person name="Puigdomenech P."/>
            <person name="Watson M."/>
            <person name="Schmidtheini T."/>
            <person name="Reichert B."/>
            <person name="Portetelle D."/>
            <person name="Perez-Alonso M."/>
            <person name="Boutry M."/>
            <person name="Bancroft I."/>
            <person name="Vos P."/>
            <person name="Hoheisel J."/>
            <person name="Zimmermann W."/>
            <person name="Wedler H."/>
            <person name="Ridley P."/>
            <person name="Langham S.-A."/>
            <person name="McCullagh B."/>
            <person name="Bilham L."/>
            <person name="Robben J."/>
            <person name="van der Schueren J."/>
            <person name="Grymonprez B."/>
            <person name="Chuang Y.-J."/>
            <person name="Vandenbussche F."/>
            <person name="Braeken M."/>
            <person name="Weltjens I."/>
            <person name="Voet M."/>
            <person name="Bastiaens I."/>
            <person name="Aert R."/>
            <person name="Defoor E."/>
            <person name="Weitzenegger T."/>
            <person name="Bothe G."/>
            <person name="Ramsperger U."/>
            <person name="Hilbert H."/>
            <person name="Braun M."/>
            <person name="Holzer E."/>
            <person name="Brandt A."/>
            <person name="Peters S."/>
            <person name="van Staveren M."/>
            <person name="Dirkse W."/>
            <person name="Mooijman P."/>
            <person name="Klein Lankhorst R."/>
            <person name="Rose M."/>
            <person name="Hauf J."/>
            <person name="Koetter P."/>
            <person name="Berneiser S."/>
            <person name="Hempel S."/>
            <person name="Feldpausch M."/>
            <person name="Lamberth S."/>
            <person name="Van den Daele H."/>
            <person name="De Keyser A."/>
            <person name="Buysshaert C."/>
            <person name="Gielen J."/>
            <person name="Villarroel R."/>
            <person name="De Clercq R."/>
            <person name="van Montagu M."/>
            <person name="Rogers J."/>
            <person name="Cronin A."/>
            <person name="Quail M.A."/>
            <person name="Bray-Allen S."/>
            <person name="Clark L."/>
            <person name="Doggett J."/>
            <person name="Hall S."/>
            <person name="Kay M."/>
            <person name="Lennard N."/>
            <person name="McLay K."/>
            <person name="Mayes R."/>
            <person name="Pettett A."/>
            <person name="Rajandream M.A."/>
            <person name="Lyne M."/>
            <person name="Benes V."/>
            <person name="Rechmann S."/>
            <person name="Borkova D."/>
            <person name="Bloecker H."/>
            <person name="Scharfe M."/>
            <person name="Grimm M."/>
            <person name="Loehnert T.-H."/>
            <person name="Dose S."/>
            <person name="de Haan M."/>
            <person name="Maarse A.C."/>
            <person name="Schaefer M."/>
            <person name="Mueller-Auer S."/>
            <person name="Gabel C."/>
            <person name="Fuchs M."/>
            <person name="Fartmann B."/>
            <person name="Granderath K."/>
            <person name="Dauner D."/>
            <person name="Herzl A."/>
            <person name="Neumann S."/>
            <person name="Argiriou A."/>
            <person name="Vitale D."/>
            <person name="Liguori R."/>
            <person name="Piravandi E."/>
            <person name="Massenet O."/>
            <person name="Quigley F."/>
            <person name="Clabauld G."/>
            <person name="Muendlein A."/>
            <person name="Felber R."/>
            <person name="Schnabl S."/>
            <person name="Hiller R."/>
            <person name="Schmidt W."/>
            <person name="Lecharny A."/>
            <person name="Aubourg S."/>
            <person name="Chefdor F."/>
            <person name="Cooke R."/>
            <person name="Berger C."/>
            <person name="Monfort A."/>
            <person name="Casacuberta E."/>
            <person name="Gibbons T."/>
            <person name="Weber N."/>
            <person name="Vandenbol M."/>
            <person name="Bargues M."/>
            <person name="Terol J."/>
            <person name="Torres A."/>
            <person name="Perez-Perez A."/>
            <person name="Purnelle B."/>
            <person name="Bent E."/>
            <person name="Johnson S."/>
            <person name="Tacon D."/>
            <person name="Jesse T."/>
            <person name="Heijnen L."/>
            <person name="Schwarz S."/>
            <person name="Scholler P."/>
            <person name="Heber S."/>
            <person name="Francs P."/>
            <person name="Bielke C."/>
            <person name="Frishman D."/>
            <person name="Haase D."/>
            <person name="Lemcke K."/>
            <person name="Mewes H.-W."/>
            <person name="Stocker S."/>
            <person name="Zaccaria P."/>
            <person name="Bevan M."/>
            <person name="Wilson R.K."/>
            <person name="de la Bastide M."/>
            <person name="Habermann K."/>
            <person name="Parnell L."/>
            <person name="Dedhia N."/>
            <person name="Gnoj L."/>
            <person name="Schutz K."/>
            <person name="Huang E."/>
            <person name="Spiegel L."/>
            <person name="Sekhon M."/>
            <person name="Murray J."/>
            <person name="Sheet P."/>
            <person name="Cordes M."/>
            <person name="Abu-Threideh J."/>
            <person name="Stoneking T."/>
            <person name="Kalicki J."/>
            <person name="Graves T."/>
            <person name="Harmon G."/>
            <person name="Edwards J."/>
            <person name="Latreille P."/>
            <person name="Courtney L."/>
            <person name="Cloud J."/>
            <person name="Abbott A."/>
            <person name="Scott K."/>
            <person name="Johnson D."/>
            <person name="Minx P."/>
            <person name="Bentley D."/>
            <person name="Fulton B."/>
            <person name="Miller N."/>
            <person name="Greco T."/>
            <person name="Kemp K."/>
            <person name="Kramer J."/>
            <person name="Fulton L."/>
            <person name="Mardis E."/>
            <person name="Dante M."/>
            <person name="Pepin K."/>
            <person name="Hillier L.W."/>
            <person name="Nelson J."/>
            <person name="Spieth J."/>
            <person name="Ryan E."/>
            <person name="Andrews S."/>
            <person name="Geisel C."/>
            <person name="Layman D."/>
            <person name="Du H."/>
            <person name="Ali J."/>
            <person name="Berghoff A."/>
            <person name="Jones K."/>
            <person name="Drone K."/>
            <person name="Cotton M."/>
            <person name="Joshu C."/>
            <person name="Antonoiu B."/>
            <person name="Zidanic M."/>
            <person name="Strong C."/>
            <person name="Sun H."/>
            <person name="Lamar B."/>
            <person name="Yordan C."/>
            <person name="Ma P."/>
            <person name="Zhong J."/>
            <person name="Preston R."/>
            <person name="Vil D."/>
            <person name="Shekher M."/>
            <person name="Matero A."/>
            <person name="Shah R."/>
            <person name="Swaby I.K."/>
            <person name="O'Shaughnessy A."/>
            <person name="Rodriguez M."/>
            <person name="Hoffman J."/>
            <person name="Till S."/>
            <person name="Granat S."/>
            <person name="Shohdy N."/>
            <person name="Hasegawa A."/>
            <person name="Hameed A."/>
            <person name="Lodhi M."/>
            <person name="Johnson A."/>
            <person name="Chen E."/>
            <person name="Marra M.A."/>
            <person name="Martienssen R."/>
            <person name="McCombie W.R."/>
        </authorList>
    </citation>
    <scope>NUCLEOTIDE SEQUENCE [LARGE SCALE GENOMIC DNA]</scope>
    <source>
        <strain>cv. Columbia</strain>
    </source>
</reference>
<reference key="3">
    <citation type="journal article" date="2017" name="Plant J.">
        <title>Araport11: a complete reannotation of the Arabidopsis thaliana reference genome.</title>
        <authorList>
            <person name="Cheng C.Y."/>
            <person name="Krishnakumar V."/>
            <person name="Chan A.P."/>
            <person name="Thibaud-Nissen F."/>
            <person name="Schobel S."/>
            <person name="Town C.D."/>
        </authorList>
    </citation>
    <scope>GENOME REANNOTATION</scope>
    <source>
        <strain>cv. Columbia</strain>
    </source>
</reference>
<reference key="4">
    <citation type="journal article" date="2003" name="Science">
        <title>Empirical analysis of transcriptional activity in the Arabidopsis genome.</title>
        <authorList>
            <person name="Yamada K."/>
            <person name="Lim J."/>
            <person name="Dale J.M."/>
            <person name="Chen H."/>
            <person name="Shinn P."/>
            <person name="Palm C.J."/>
            <person name="Southwick A.M."/>
            <person name="Wu H.C."/>
            <person name="Kim C.J."/>
            <person name="Nguyen M."/>
            <person name="Pham P.K."/>
            <person name="Cheuk R.F."/>
            <person name="Karlin-Newmann G."/>
            <person name="Liu S.X."/>
            <person name="Lam B."/>
            <person name="Sakano H."/>
            <person name="Wu T."/>
            <person name="Yu G."/>
            <person name="Miranda M."/>
            <person name="Quach H.L."/>
            <person name="Tripp M."/>
            <person name="Chang C.H."/>
            <person name="Lee J.M."/>
            <person name="Toriumi M.J."/>
            <person name="Chan M.M."/>
            <person name="Tang C.C."/>
            <person name="Onodera C.S."/>
            <person name="Deng J.M."/>
            <person name="Akiyama K."/>
            <person name="Ansari Y."/>
            <person name="Arakawa T."/>
            <person name="Banh J."/>
            <person name="Banno F."/>
            <person name="Bowser L."/>
            <person name="Brooks S.Y."/>
            <person name="Carninci P."/>
            <person name="Chao Q."/>
            <person name="Choy N."/>
            <person name="Enju A."/>
            <person name="Goldsmith A.D."/>
            <person name="Gurjal M."/>
            <person name="Hansen N.F."/>
            <person name="Hayashizaki Y."/>
            <person name="Johnson-Hopson C."/>
            <person name="Hsuan V.W."/>
            <person name="Iida K."/>
            <person name="Karnes M."/>
            <person name="Khan S."/>
            <person name="Koesema E."/>
            <person name="Ishida J."/>
            <person name="Jiang P.X."/>
            <person name="Jones T."/>
            <person name="Kawai J."/>
            <person name="Kamiya A."/>
            <person name="Meyers C."/>
            <person name="Nakajima M."/>
            <person name="Narusaka M."/>
            <person name="Seki M."/>
            <person name="Sakurai T."/>
            <person name="Satou M."/>
            <person name="Tamse R."/>
            <person name="Vaysberg M."/>
            <person name="Wallender E.K."/>
            <person name="Wong C."/>
            <person name="Yamamura Y."/>
            <person name="Yuan S."/>
            <person name="Shinozaki K."/>
            <person name="Davis R.W."/>
            <person name="Theologis A."/>
            <person name="Ecker J.R."/>
        </authorList>
    </citation>
    <scope>NUCLEOTIDE SEQUENCE [LARGE SCALE MRNA] (ISOFORM 1)</scope>
    <source>
        <strain>cv. Columbia</strain>
    </source>
</reference>
<reference key="5">
    <citation type="submission" date="1999-01" db="EMBL/GenBank/DDBJ databases">
        <title>Molecular cloning and biochemical characterisation of the Arabidopsis thaliana D1-processing protease.</title>
        <authorList>
            <person name="Camilleri R.S."/>
            <person name="Ridley S.M."/>
            <person name="Thomas P.G."/>
            <person name="Bowyer J.R."/>
        </authorList>
    </citation>
    <scope>NUCLEOTIDE SEQUENCE [MRNA] OF 7-505 (ISOFORM 2)</scope>
    <source>
        <strain>cv. Columbia</strain>
    </source>
</reference>
<reference key="6">
    <citation type="journal article" date="2002" name="J. Biol. Chem.">
        <title>Proteome map of the chloroplast lumen of Arabidopsis thaliana.</title>
        <authorList>
            <person name="Schubert M."/>
            <person name="Petersson U.A."/>
            <person name="Haas B.J."/>
            <person name="Funk C."/>
            <person name="Schroeder W.P."/>
            <person name="Kieselbach T."/>
        </authorList>
    </citation>
    <scope>PROTEIN SEQUENCE OF 127-137</scope>
    <scope>SUBCELLULAR LOCATION</scope>
</reference>
<reference key="7">
    <citation type="journal article" date="2006" name="BMC Genomics">
        <title>Cross genome comparisons of serine proteases in Arabidopsis and rice.</title>
        <authorList>
            <person name="Tripathi L.P."/>
            <person name="Sowdhamini R."/>
        </authorList>
    </citation>
    <scope>REVIEW</scope>
</reference>
<accession>O23614</accession>
<accession>F4JPY6</accession>
<accession>Q9ZP02</accession>
<proteinExistence type="evidence at protein level"/>
<protein>
    <recommendedName>
        <fullName>Carboxyl-terminal-processing peptidase 2, chloroplastic</fullName>
        <ecNumber>3.4.21.102</ecNumber>
    </recommendedName>
    <alternativeName>
        <fullName>D1 C-terminal processing protease 2</fullName>
    </alternativeName>
    <alternativeName>
        <fullName>Photosystem II D1 protein processing peptidase 2</fullName>
    </alternativeName>
</protein>
<feature type="transit peptide" description="Chloroplast" evidence="3">
    <location>
        <begin position="1"/>
        <end status="unknown"/>
    </location>
</feature>
<feature type="transit peptide" description="Thylakoid" evidence="5">
    <location>
        <begin status="unknown"/>
        <end position="126"/>
    </location>
</feature>
<feature type="chain" id="PRO_0000429322" description="Carboxyl-terminal-processing peptidase 2, chloroplastic">
    <location>
        <begin position="127"/>
        <end position="515"/>
    </location>
</feature>
<feature type="domain" description="PDZ" evidence="4">
    <location>
        <begin position="198"/>
        <end position="286"/>
    </location>
</feature>
<feature type="active site" description="Charge relay system" evidence="1">
    <location>
        <position position="417"/>
    </location>
</feature>
<feature type="active site" description="Charge relay system" evidence="1">
    <location>
        <position position="442"/>
    </location>
</feature>
<feature type="splice variant" id="VSP_054872" description="In isoform 2." evidence="6">
    <location>
        <begin position="28"/>
        <end position="37"/>
    </location>
</feature>
<evidence type="ECO:0000250" key="1"/>
<evidence type="ECO:0000250" key="2">
    <source>
        <dbReference type="UniProtKB" id="O04073"/>
    </source>
</evidence>
<evidence type="ECO:0000255" key="3"/>
<evidence type="ECO:0000255" key="4">
    <source>
        <dbReference type="PROSITE-ProRule" id="PRU00143"/>
    </source>
</evidence>
<evidence type="ECO:0000269" key="5">
    <source>
    </source>
</evidence>
<evidence type="ECO:0000303" key="6">
    <source ref="5"/>
</evidence>
<evidence type="ECO:0000305" key="7"/>
<sequence>MEVLASSSLSPISFTKPNKINPNFSIQVKLWVKQPPKISKASKFSYARSRSNISRSNAANPGVVFVCNRFLCVIERNDQRKLSGKVMMKSSVNFRQNLSVALVRIVSVLLVSSISVVTTDSPPSWGLTEENLLFLEAWRTIDRAYIDKTFNGQSWFRYRETALRNEPMNTREETYMAIKKMVATLDDPFTRFLEPGKFKSLRSGTQGAVTGVGLSIGYPTASDGPPAGLVVISAAPGGPANRAGILPGDVIQGIDNTTTETLTIYDAAQMLQGPEGSAVELAIRSGPETRLLTLTRERVSVNPVKSRLCELPGSGSNSPKIGYIKLTTFNQNASSAVREAIETLRGNNVNAFVLDLRDNSGGSFPEGIEIAKFWLDKGVIVYICDSRGVRDIYDTDGSNAIATSEPLAVLVNKGTASASEILAGALKDNKRALVYGEPTYGKGKIQSVFELSDGSGLAVTVARYETPAHTDIDKVGVTPDHPLPKSFPKDEEAFCGCLKDPTAACYLNQGLLFSR</sequence>